<organism>
    <name type="scientific">Mumps virus (strain Edingburgh 4)</name>
    <name type="common">MuV</name>
    <dbReference type="NCBI Taxonomy" id="11163"/>
    <lineage>
        <taxon>Viruses</taxon>
        <taxon>Riboviria</taxon>
        <taxon>Orthornavirae</taxon>
        <taxon>Negarnaviricota</taxon>
        <taxon>Haploviricotina</taxon>
        <taxon>Monjiviricetes</taxon>
        <taxon>Mononegavirales</taxon>
        <taxon>Paramyxoviridae</taxon>
        <taxon>Rubulavirinae</taxon>
        <taxon>Orthorubulavirus</taxon>
        <taxon>Orthorubulavirus parotitidis</taxon>
        <taxon>Mumps orthorubulavirus</taxon>
    </lineage>
</organism>
<accession>P28085</accession>
<sequence length="57" mass="6852">MPAIQPPLYLTFLLLMLLYRIITLYVWSLSTITYKTSVRHASLYQRSFFRWSVDHSL</sequence>
<organismHost>
    <name type="scientific">Homo sapiens</name>
    <name type="common">Human</name>
    <dbReference type="NCBI Taxonomy" id="9606"/>
</organismHost>
<feature type="chain" id="PRO_0000142875" description="Small hydrophobic protein">
    <location>
        <begin position="1"/>
        <end position="57"/>
    </location>
</feature>
<feature type="topological domain" description="Virion surface" evidence="3">
    <location>
        <begin position="1"/>
        <end position="8"/>
    </location>
</feature>
<feature type="transmembrane region" description="Helical" evidence="3">
    <location>
        <begin position="9"/>
        <end position="29"/>
    </location>
</feature>
<feature type="topological domain" description="Intravirion" evidence="3">
    <location>
        <begin position="30"/>
        <end position="57"/>
    </location>
</feature>
<dbReference type="EMBL" id="X63710">
    <property type="protein sequence ID" value="CAA45243.1"/>
    <property type="molecule type" value="Genomic_RNA"/>
</dbReference>
<dbReference type="PIR" id="S19867">
    <property type="entry name" value="SHNZE4"/>
</dbReference>
<dbReference type="SMR" id="P28085"/>
<dbReference type="GO" id="GO:0020002">
    <property type="term" value="C:host cell plasma membrane"/>
    <property type="evidence" value="ECO:0007669"/>
    <property type="project" value="UniProtKB-SubCell"/>
</dbReference>
<dbReference type="GO" id="GO:0016020">
    <property type="term" value="C:membrane"/>
    <property type="evidence" value="ECO:0007669"/>
    <property type="project" value="UniProtKB-KW"/>
</dbReference>
<dbReference type="GO" id="GO:0055036">
    <property type="term" value="C:virion membrane"/>
    <property type="evidence" value="ECO:0007669"/>
    <property type="project" value="UniProtKB-SubCell"/>
</dbReference>
<dbReference type="GO" id="GO:0085034">
    <property type="term" value="P:symbiont-mediated suppression of host NF-kappaB cascade"/>
    <property type="evidence" value="ECO:0007669"/>
    <property type="project" value="UniProtKB-KW"/>
</dbReference>
<dbReference type="InterPro" id="IPR001477">
    <property type="entry name" value="SH"/>
</dbReference>
<dbReference type="Pfam" id="PF01445">
    <property type="entry name" value="SH"/>
    <property type="match status" value="1"/>
</dbReference>
<dbReference type="PIRSF" id="PIRSF003923">
    <property type="entry name" value="SH"/>
    <property type="match status" value="1"/>
</dbReference>
<keyword id="KW-1032">Host cell membrane</keyword>
<keyword id="KW-1043">Host membrane</keyword>
<keyword id="KW-0945">Host-virus interaction</keyword>
<keyword id="KW-1100">Inhibition of host NF-kappa-B by virus</keyword>
<keyword id="KW-0472">Membrane</keyword>
<keyword id="KW-0812">Transmembrane</keyword>
<keyword id="KW-1133">Transmembrane helix</keyword>
<keyword id="KW-0946">Virion</keyword>
<proteinExistence type="inferred from homology"/>
<comment type="function">
    <text evidence="2">Plays a role in the inhibition of the host NF-kappa-B pathway. This inhibition occurs at the receptor level, by preventing the signaling of TNFR1 as well as IL-1R and TLR3.</text>
</comment>
<comment type="subunit">
    <text evidence="1 2">Interacts with host TNFRSF1A, RIPK1 and IRAK1; these interactions interfere with host NF-kappa-B activation at the level of receptor complexes (By similarity). Interacts with host protein UBQLN4 (By similarity).</text>
</comment>
<comment type="subcellular location">
    <subcellularLocation>
        <location evidence="2">Virion membrane</location>
        <topology evidence="2">Single-pass membrane protein</topology>
    </subcellularLocation>
    <subcellularLocation>
        <location evidence="2">Host cell membrane</location>
        <topology evidence="2">Single-pass membrane protein</topology>
    </subcellularLocation>
</comment>
<comment type="similarity">
    <text evidence="4">Belongs to the rubulavirus small hydrophobic protein family.</text>
</comment>
<reference key="1">
    <citation type="journal article" date="1993" name="Arch. Virol.">
        <title>Identification of a new mumps virus lineage by nucleotide sequence analysis of the SH gene of ten different strains.</title>
        <authorList>
            <person name="Yeo R.P."/>
            <person name="Afzal M.A."/>
            <person name="Forsey T."/>
            <person name="Rima B.K."/>
        </authorList>
    </citation>
    <scope>NUCLEOTIDE SEQUENCE [GENOMIC RNA]</scope>
</reference>
<gene>
    <name type="primary">SH</name>
</gene>
<name>SH_MUMP4</name>
<evidence type="ECO:0000250" key="1">
    <source>
        <dbReference type="UniProtKB" id="P22110"/>
    </source>
</evidence>
<evidence type="ECO:0000250" key="2">
    <source>
        <dbReference type="UniProtKB" id="P22112"/>
    </source>
</evidence>
<evidence type="ECO:0000255" key="3"/>
<evidence type="ECO:0000305" key="4"/>
<protein>
    <recommendedName>
        <fullName>Small hydrophobic protein</fullName>
    </recommendedName>
</protein>